<proteinExistence type="predicted"/>
<evidence type="ECO:0000256" key="1">
    <source>
        <dbReference type="SAM" id="MobiDB-lite"/>
    </source>
</evidence>
<reference key="1">
    <citation type="journal article" date="2005" name="Nature">
        <title>The genome of the social amoeba Dictyostelium discoideum.</title>
        <authorList>
            <person name="Eichinger L."/>
            <person name="Pachebat J.A."/>
            <person name="Gloeckner G."/>
            <person name="Rajandream M.A."/>
            <person name="Sucgang R."/>
            <person name="Berriman M."/>
            <person name="Song J."/>
            <person name="Olsen R."/>
            <person name="Szafranski K."/>
            <person name="Xu Q."/>
            <person name="Tunggal B."/>
            <person name="Kummerfeld S."/>
            <person name="Madera M."/>
            <person name="Konfortov B.A."/>
            <person name="Rivero F."/>
            <person name="Bankier A.T."/>
            <person name="Lehmann R."/>
            <person name="Hamlin N."/>
            <person name="Davies R."/>
            <person name="Gaudet P."/>
            <person name="Fey P."/>
            <person name="Pilcher K."/>
            <person name="Chen G."/>
            <person name="Saunders D."/>
            <person name="Sodergren E.J."/>
            <person name="Davis P."/>
            <person name="Kerhornou A."/>
            <person name="Nie X."/>
            <person name="Hall N."/>
            <person name="Anjard C."/>
            <person name="Hemphill L."/>
            <person name="Bason N."/>
            <person name="Farbrother P."/>
            <person name="Desany B."/>
            <person name="Just E."/>
            <person name="Morio T."/>
            <person name="Rost R."/>
            <person name="Churcher C.M."/>
            <person name="Cooper J."/>
            <person name="Haydock S."/>
            <person name="van Driessche N."/>
            <person name="Cronin A."/>
            <person name="Goodhead I."/>
            <person name="Muzny D.M."/>
            <person name="Mourier T."/>
            <person name="Pain A."/>
            <person name="Lu M."/>
            <person name="Harper D."/>
            <person name="Lindsay R."/>
            <person name="Hauser H."/>
            <person name="James K.D."/>
            <person name="Quiles M."/>
            <person name="Madan Babu M."/>
            <person name="Saito T."/>
            <person name="Buchrieser C."/>
            <person name="Wardroper A."/>
            <person name="Felder M."/>
            <person name="Thangavelu M."/>
            <person name="Johnson D."/>
            <person name="Knights A."/>
            <person name="Loulseged H."/>
            <person name="Mungall K.L."/>
            <person name="Oliver K."/>
            <person name="Price C."/>
            <person name="Quail M.A."/>
            <person name="Urushihara H."/>
            <person name="Hernandez J."/>
            <person name="Rabbinowitsch E."/>
            <person name="Steffen D."/>
            <person name="Sanders M."/>
            <person name="Ma J."/>
            <person name="Kohara Y."/>
            <person name="Sharp S."/>
            <person name="Simmonds M.N."/>
            <person name="Spiegler S."/>
            <person name="Tivey A."/>
            <person name="Sugano S."/>
            <person name="White B."/>
            <person name="Walker D."/>
            <person name="Woodward J.R."/>
            <person name="Winckler T."/>
            <person name="Tanaka Y."/>
            <person name="Shaulsky G."/>
            <person name="Schleicher M."/>
            <person name="Weinstock G.M."/>
            <person name="Rosenthal A."/>
            <person name="Cox E.C."/>
            <person name="Chisholm R.L."/>
            <person name="Gibbs R.A."/>
            <person name="Loomis W.F."/>
            <person name="Platzer M."/>
            <person name="Kay R.R."/>
            <person name="Williams J.G."/>
            <person name="Dear P.H."/>
            <person name="Noegel A.A."/>
            <person name="Barrell B.G."/>
            <person name="Kuspa A."/>
        </authorList>
    </citation>
    <scope>NUCLEOTIDE SEQUENCE [LARGE SCALE GENOMIC DNA]</scope>
    <source>
        <strain>AX4</strain>
    </source>
</reference>
<organism>
    <name type="scientific">Dictyostelium discoideum</name>
    <name type="common">Social amoeba</name>
    <dbReference type="NCBI Taxonomy" id="44689"/>
    <lineage>
        <taxon>Eukaryota</taxon>
        <taxon>Amoebozoa</taxon>
        <taxon>Evosea</taxon>
        <taxon>Eumycetozoa</taxon>
        <taxon>Dictyostelia</taxon>
        <taxon>Dictyosteliales</taxon>
        <taxon>Dictyosteliaceae</taxon>
        <taxon>Dictyostelium</taxon>
    </lineage>
</organism>
<keyword id="KW-1185">Reference proteome</keyword>
<name>Y7130_DICDI</name>
<gene>
    <name type="ORF">DDB_G0286751</name>
</gene>
<protein>
    <recommendedName>
        <fullName>Putative uncharacterized protein DDB_G0286751</fullName>
    </recommendedName>
</protein>
<accession>Q54LA3</accession>
<sequence>MTKKVKLDQDEINNKNKNNINNSFCNNKNNNSLNSDLDNLNINLYDNNNNNNNNNNNNNNNNNNNNNNNNNNNNNNNNNNNNNNNYNNFCNGNNNFNEDCNNNDNDENDRYKCNDEFDFRHKKSTRSQSQSSLNSFDQDNKSKDKKVINKTIDIRVGRPHSQPLQPQTQINIQFSKLFI</sequence>
<feature type="chain" id="PRO_0000348517" description="Putative uncharacterized protein DDB_G0286751">
    <location>
        <begin position="1"/>
        <end position="179"/>
    </location>
</feature>
<feature type="region of interest" description="Disordered" evidence="1">
    <location>
        <begin position="1"/>
        <end position="90"/>
    </location>
</feature>
<feature type="region of interest" description="Disordered" evidence="1">
    <location>
        <begin position="121"/>
        <end position="147"/>
    </location>
</feature>
<feature type="compositionally biased region" description="Basic and acidic residues" evidence="1">
    <location>
        <begin position="1"/>
        <end position="14"/>
    </location>
</feature>
<feature type="compositionally biased region" description="Low complexity" evidence="1">
    <location>
        <begin position="15"/>
        <end position="90"/>
    </location>
</feature>
<feature type="compositionally biased region" description="Low complexity" evidence="1">
    <location>
        <begin position="126"/>
        <end position="137"/>
    </location>
</feature>
<feature type="compositionally biased region" description="Basic and acidic residues" evidence="1">
    <location>
        <begin position="138"/>
        <end position="147"/>
    </location>
</feature>
<dbReference type="EMBL" id="AAFI02000089">
    <property type="protein sequence ID" value="EAL64131.1"/>
    <property type="molecule type" value="Genomic_DNA"/>
</dbReference>
<dbReference type="RefSeq" id="XP_637658.1">
    <property type="nucleotide sequence ID" value="XM_632566.1"/>
</dbReference>
<dbReference type="PaxDb" id="44689-DDB0187130"/>
<dbReference type="EnsemblProtists" id="EAL64131">
    <property type="protein sequence ID" value="EAL64131"/>
    <property type="gene ID" value="DDB_G0286751"/>
</dbReference>
<dbReference type="GeneID" id="8625798"/>
<dbReference type="KEGG" id="ddi:DDB_G0286751"/>
<dbReference type="dictyBase" id="DDB_G0286751"/>
<dbReference type="VEuPathDB" id="AmoebaDB:DDB_G0286751"/>
<dbReference type="HOGENOM" id="CLU_1506117_0_0_1"/>
<dbReference type="InParanoid" id="Q54LA3"/>
<dbReference type="OMA" id="YKCNDEF"/>
<dbReference type="PRO" id="PR:Q54LA3"/>
<dbReference type="Proteomes" id="UP000002195">
    <property type="component" value="Chromosome 4"/>
</dbReference>